<protein>
    <recommendedName>
        <fullName evidence="1">Dihydroxy-acid dehydratase 1</fullName>
        <shortName evidence="1">DAD 1</shortName>
        <ecNumber evidence="1">4.2.1.9</ecNumber>
    </recommendedName>
</protein>
<accession>Q3IJH1</accession>
<dbReference type="EC" id="4.2.1.9" evidence="1"/>
<dbReference type="EMBL" id="CR954246">
    <property type="protein sequence ID" value="CAI87817.1"/>
    <property type="molecule type" value="Genomic_DNA"/>
</dbReference>
<dbReference type="SMR" id="Q3IJH1"/>
<dbReference type="STRING" id="326442.PSHAa2769"/>
<dbReference type="KEGG" id="pha:PSHAa2769"/>
<dbReference type="PATRIC" id="fig|326442.8.peg.2678"/>
<dbReference type="eggNOG" id="COG0129">
    <property type="taxonomic scope" value="Bacteria"/>
</dbReference>
<dbReference type="HOGENOM" id="CLU_014271_4_2_6"/>
<dbReference type="BioCyc" id="PHAL326442:PSHA_RS13610-MONOMER"/>
<dbReference type="UniPathway" id="UPA00047">
    <property type="reaction ID" value="UER00057"/>
</dbReference>
<dbReference type="UniPathway" id="UPA00049">
    <property type="reaction ID" value="UER00061"/>
</dbReference>
<dbReference type="Proteomes" id="UP000006843">
    <property type="component" value="Chromosome I"/>
</dbReference>
<dbReference type="GO" id="GO:0005829">
    <property type="term" value="C:cytosol"/>
    <property type="evidence" value="ECO:0007669"/>
    <property type="project" value="TreeGrafter"/>
</dbReference>
<dbReference type="GO" id="GO:0051537">
    <property type="term" value="F:2 iron, 2 sulfur cluster binding"/>
    <property type="evidence" value="ECO:0007669"/>
    <property type="project" value="UniProtKB-UniRule"/>
</dbReference>
<dbReference type="GO" id="GO:0004160">
    <property type="term" value="F:dihydroxy-acid dehydratase activity"/>
    <property type="evidence" value="ECO:0007669"/>
    <property type="project" value="UniProtKB-UniRule"/>
</dbReference>
<dbReference type="GO" id="GO:0000287">
    <property type="term" value="F:magnesium ion binding"/>
    <property type="evidence" value="ECO:0007669"/>
    <property type="project" value="UniProtKB-UniRule"/>
</dbReference>
<dbReference type="GO" id="GO:0009097">
    <property type="term" value="P:isoleucine biosynthetic process"/>
    <property type="evidence" value="ECO:0007669"/>
    <property type="project" value="UniProtKB-UniRule"/>
</dbReference>
<dbReference type="GO" id="GO:0009099">
    <property type="term" value="P:L-valine biosynthetic process"/>
    <property type="evidence" value="ECO:0007669"/>
    <property type="project" value="UniProtKB-UniRule"/>
</dbReference>
<dbReference type="FunFam" id="3.50.30.80:FF:000001">
    <property type="entry name" value="Dihydroxy-acid dehydratase"/>
    <property type="match status" value="1"/>
</dbReference>
<dbReference type="Gene3D" id="3.50.30.80">
    <property type="entry name" value="IlvD/EDD C-terminal domain-like"/>
    <property type="match status" value="1"/>
</dbReference>
<dbReference type="HAMAP" id="MF_00012">
    <property type="entry name" value="IlvD"/>
    <property type="match status" value="1"/>
</dbReference>
<dbReference type="InterPro" id="IPR042096">
    <property type="entry name" value="Dihydro-acid_dehy_C"/>
</dbReference>
<dbReference type="InterPro" id="IPR004404">
    <property type="entry name" value="DihydroxyA_deHydtase"/>
</dbReference>
<dbReference type="InterPro" id="IPR020558">
    <property type="entry name" value="DiOHA_6PGluconate_deHydtase_CS"/>
</dbReference>
<dbReference type="InterPro" id="IPR056740">
    <property type="entry name" value="ILV_EDD_C"/>
</dbReference>
<dbReference type="InterPro" id="IPR000581">
    <property type="entry name" value="ILV_EDD_N"/>
</dbReference>
<dbReference type="InterPro" id="IPR037237">
    <property type="entry name" value="IlvD/EDD_N"/>
</dbReference>
<dbReference type="NCBIfam" id="TIGR00110">
    <property type="entry name" value="ilvD"/>
    <property type="match status" value="1"/>
</dbReference>
<dbReference type="NCBIfam" id="NF009103">
    <property type="entry name" value="PRK12448.1"/>
    <property type="match status" value="1"/>
</dbReference>
<dbReference type="PANTHER" id="PTHR43661">
    <property type="entry name" value="D-XYLONATE DEHYDRATASE"/>
    <property type="match status" value="1"/>
</dbReference>
<dbReference type="PANTHER" id="PTHR43661:SF3">
    <property type="entry name" value="D-XYLONATE DEHYDRATASE YAGF-RELATED"/>
    <property type="match status" value="1"/>
</dbReference>
<dbReference type="Pfam" id="PF24877">
    <property type="entry name" value="ILV_EDD_C"/>
    <property type="match status" value="1"/>
</dbReference>
<dbReference type="Pfam" id="PF00920">
    <property type="entry name" value="ILVD_EDD_N"/>
    <property type="match status" value="1"/>
</dbReference>
<dbReference type="SUPFAM" id="SSF143975">
    <property type="entry name" value="IlvD/EDD N-terminal domain-like"/>
    <property type="match status" value="1"/>
</dbReference>
<dbReference type="SUPFAM" id="SSF52016">
    <property type="entry name" value="LeuD/IlvD-like"/>
    <property type="match status" value="1"/>
</dbReference>
<dbReference type="PROSITE" id="PS00886">
    <property type="entry name" value="ILVD_EDD_1"/>
    <property type="match status" value="1"/>
</dbReference>
<dbReference type="PROSITE" id="PS00887">
    <property type="entry name" value="ILVD_EDD_2"/>
    <property type="match status" value="1"/>
</dbReference>
<keyword id="KW-0001">2Fe-2S</keyword>
<keyword id="KW-0028">Amino-acid biosynthesis</keyword>
<keyword id="KW-0100">Branched-chain amino acid biosynthesis</keyword>
<keyword id="KW-0408">Iron</keyword>
<keyword id="KW-0411">Iron-sulfur</keyword>
<keyword id="KW-0456">Lyase</keyword>
<keyword id="KW-0460">Magnesium</keyword>
<keyword id="KW-0479">Metal-binding</keyword>
<keyword id="KW-1185">Reference proteome</keyword>
<feature type="chain" id="PRO_0000225408" description="Dihydroxy-acid dehydratase 1">
    <location>
        <begin position="1"/>
        <end position="618"/>
    </location>
</feature>
<feature type="active site" description="Proton acceptor" evidence="1">
    <location>
        <position position="517"/>
    </location>
</feature>
<feature type="binding site" evidence="1">
    <location>
        <position position="81"/>
    </location>
    <ligand>
        <name>Mg(2+)</name>
        <dbReference type="ChEBI" id="CHEBI:18420"/>
    </ligand>
</feature>
<feature type="binding site" evidence="1">
    <location>
        <position position="122"/>
    </location>
    <ligand>
        <name>[2Fe-2S] cluster</name>
        <dbReference type="ChEBI" id="CHEBI:190135"/>
    </ligand>
</feature>
<feature type="binding site" evidence="1">
    <location>
        <position position="123"/>
    </location>
    <ligand>
        <name>Mg(2+)</name>
        <dbReference type="ChEBI" id="CHEBI:18420"/>
    </ligand>
</feature>
<feature type="binding site" description="via carbamate group" evidence="1">
    <location>
        <position position="124"/>
    </location>
    <ligand>
        <name>Mg(2+)</name>
        <dbReference type="ChEBI" id="CHEBI:18420"/>
    </ligand>
</feature>
<feature type="binding site" evidence="1">
    <location>
        <position position="195"/>
    </location>
    <ligand>
        <name>[2Fe-2S] cluster</name>
        <dbReference type="ChEBI" id="CHEBI:190135"/>
    </ligand>
</feature>
<feature type="binding site" evidence="1">
    <location>
        <position position="491"/>
    </location>
    <ligand>
        <name>Mg(2+)</name>
        <dbReference type="ChEBI" id="CHEBI:18420"/>
    </ligand>
</feature>
<feature type="modified residue" description="N6-carboxylysine" evidence="1">
    <location>
        <position position="124"/>
    </location>
</feature>
<evidence type="ECO:0000255" key="1">
    <source>
        <dbReference type="HAMAP-Rule" id="MF_00012"/>
    </source>
</evidence>
<name>ILVD1_PSET1</name>
<organism>
    <name type="scientific">Pseudoalteromonas translucida (strain TAC 125)</name>
    <dbReference type="NCBI Taxonomy" id="326442"/>
    <lineage>
        <taxon>Bacteria</taxon>
        <taxon>Pseudomonadati</taxon>
        <taxon>Pseudomonadota</taxon>
        <taxon>Gammaproteobacteria</taxon>
        <taxon>Alteromonadales</taxon>
        <taxon>Pseudoalteromonadaceae</taxon>
        <taxon>Pseudoalteromonas</taxon>
    </lineage>
</organism>
<gene>
    <name evidence="1" type="primary">ilvD1</name>
    <name type="ordered locus">PSHAa2769</name>
</gene>
<proteinExistence type="inferred from homology"/>
<comment type="function">
    <text evidence="1">Functions in the biosynthesis of branched-chain amino acids. Catalyzes the dehydration of (2R,3R)-2,3-dihydroxy-3-methylpentanoate (2,3-dihydroxy-3-methylvalerate) into 2-oxo-3-methylpentanoate (2-oxo-3-methylvalerate) and of (2R)-2,3-dihydroxy-3-methylbutanoate (2,3-dihydroxyisovalerate) into 2-oxo-3-methylbutanoate (2-oxoisovalerate), the penultimate precursor to L-isoleucine and L-valine, respectively.</text>
</comment>
<comment type="catalytic activity">
    <reaction evidence="1">
        <text>(2R)-2,3-dihydroxy-3-methylbutanoate = 3-methyl-2-oxobutanoate + H2O</text>
        <dbReference type="Rhea" id="RHEA:24809"/>
        <dbReference type="ChEBI" id="CHEBI:11851"/>
        <dbReference type="ChEBI" id="CHEBI:15377"/>
        <dbReference type="ChEBI" id="CHEBI:49072"/>
        <dbReference type="EC" id="4.2.1.9"/>
    </reaction>
    <physiologicalReaction direction="left-to-right" evidence="1">
        <dbReference type="Rhea" id="RHEA:24810"/>
    </physiologicalReaction>
</comment>
<comment type="catalytic activity">
    <reaction evidence="1">
        <text>(2R,3R)-2,3-dihydroxy-3-methylpentanoate = (S)-3-methyl-2-oxopentanoate + H2O</text>
        <dbReference type="Rhea" id="RHEA:27694"/>
        <dbReference type="ChEBI" id="CHEBI:15377"/>
        <dbReference type="ChEBI" id="CHEBI:35146"/>
        <dbReference type="ChEBI" id="CHEBI:49258"/>
        <dbReference type="EC" id="4.2.1.9"/>
    </reaction>
    <physiologicalReaction direction="left-to-right" evidence="1">
        <dbReference type="Rhea" id="RHEA:27695"/>
    </physiologicalReaction>
</comment>
<comment type="cofactor">
    <cofactor evidence="1">
        <name>[2Fe-2S] cluster</name>
        <dbReference type="ChEBI" id="CHEBI:190135"/>
    </cofactor>
    <text evidence="1">Binds 1 [2Fe-2S] cluster per subunit. This cluster acts as a Lewis acid cofactor.</text>
</comment>
<comment type="cofactor">
    <cofactor evidence="1">
        <name>Mg(2+)</name>
        <dbReference type="ChEBI" id="CHEBI:18420"/>
    </cofactor>
</comment>
<comment type="pathway">
    <text evidence="1">Amino-acid biosynthesis; L-isoleucine biosynthesis; L-isoleucine from 2-oxobutanoate: step 3/4.</text>
</comment>
<comment type="pathway">
    <text evidence="1">Amino-acid biosynthesis; L-valine biosynthesis; L-valine from pyruvate: step 3/4.</text>
</comment>
<comment type="subunit">
    <text evidence="1">Homodimer.</text>
</comment>
<comment type="similarity">
    <text evidence="1">Belongs to the IlvD/Edd family.</text>
</comment>
<sequence length="618" mass="65833">MAKLRSATTTEGRKRAGARALWRATGMTDSDFGKPIIAVVNSFTQFVPGHVHLNQLSELMGETITAAGGVPKEFNTIAIDDGIAMGHGGMLYSLPSRDLIADSVEYMVNGHCADAMICISNCDKITPGMMLAALRLNIPVIFVSGGPMEAGKTKLANIDIKLDLVDAMVKGADESVSDADSDQVERSACPTCGSCSGMFTANSMNCLLEAIGLALPGNGTTLATHKDRKQLYVEAGARIVDLCREYYQKDNQEVLPRAIANKTAFMNAMVVDIAMGGSSNTVLHLLAAAQEAGVDFDMSHIDALSRKTPFLCKVAPATPEYHIEDVHRAGGMMAIVRELGKAGLVDMSVNHVAGSTMAELVKKWDATDPTNEAARKFYRAGPAGIRTTKAMSQECRWDEGDNDREHGCIRSVEHAFRQDGGLAVLSGNLAVDGCVVKSAGVVDDMLHFEGTAVVYESQDDSVEGILNDEVKAGDVVVIRYEGPKGGPGMQEMLYPTSYLKSKGLAEKCALITDGRFSGGTSGLSIGHVSPEAASGGAIAYVENGDKIIIDIATREITLALSDAELEARKQKQLARGKQAYKPLDRQRYVSSALKAYALLATSADKGAVRDLAKLEELS</sequence>
<reference key="1">
    <citation type="journal article" date="2005" name="Genome Res.">
        <title>Coping with cold: the genome of the versatile marine Antarctica bacterium Pseudoalteromonas haloplanktis TAC125.</title>
        <authorList>
            <person name="Medigue C."/>
            <person name="Krin E."/>
            <person name="Pascal G."/>
            <person name="Barbe V."/>
            <person name="Bernsel A."/>
            <person name="Bertin P.N."/>
            <person name="Cheung F."/>
            <person name="Cruveiller S."/>
            <person name="D'Amico S."/>
            <person name="Duilio A."/>
            <person name="Fang G."/>
            <person name="Feller G."/>
            <person name="Ho C."/>
            <person name="Mangenot S."/>
            <person name="Marino G."/>
            <person name="Nilsson J."/>
            <person name="Parrilli E."/>
            <person name="Rocha E.P.C."/>
            <person name="Rouy Z."/>
            <person name="Sekowska A."/>
            <person name="Tutino M.L."/>
            <person name="Vallenet D."/>
            <person name="von Heijne G."/>
            <person name="Danchin A."/>
        </authorList>
    </citation>
    <scope>NUCLEOTIDE SEQUENCE [LARGE SCALE GENOMIC DNA]</scope>
    <source>
        <strain>TAC 125</strain>
    </source>
</reference>